<feature type="chain" id="PRO_0000090317" description="Triosephosphate isomerase">
    <location>
        <begin position="1"/>
        <end position="256"/>
    </location>
</feature>
<feature type="active site" description="Electrophile" evidence="1">
    <location>
        <position position="97"/>
    </location>
</feature>
<feature type="active site" description="Proton acceptor" evidence="1">
    <location>
        <position position="169"/>
    </location>
</feature>
<feature type="binding site" evidence="1">
    <location>
        <begin position="9"/>
        <end position="11"/>
    </location>
    <ligand>
        <name>substrate</name>
    </ligand>
</feature>
<feature type="binding site" evidence="1">
    <location>
        <position position="175"/>
    </location>
    <ligand>
        <name>substrate</name>
    </ligand>
</feature>
<feature type="binding site" evidence="1">
    <location>
        <position position="214"/>
    </location>
    <ligand>
        <name>substrate</name>
    </ligand>
</feature>
<feature type="binding site" evidence="1">
    <location>
        <begin position="235"/>
        <end position="236"/>
    </location>
    <ligand>
        <name>substrate</name>
    </ligand>
</feature>
<accession>Q8DCQ3</accession>
<keyword id="KW-0963">Cytoplasm</keyword>
<keyword id="KW-0312">Gluconeogenesis</keyword>
<keyword id="KW-0324">Glycolysis</keyword>
<keyword id="KW-0413">Isomerase</keyword>
<gene>
    <name evidence="1" type="primary">tpiA</name>
    <name type="ordered locus">VV1_1343</name>
</gene>
<dbReference type="EC" id="5.3.1.1" evidence="1"/>
<dbReference type="EMBL" id="AE016795">
    <property type="protein sequence ID" value="AAO09797.1"/>
    <property type="molecule type" value="Genomic_DNA"/>
</dbReference>
<dbReference type="RefSeq" id="WP_011079322.1">
    <property type="nucleotide sequence ID" value="NC_004459.3"/>
</dbReference>
<dbReference type="SMR" id="Q8DCQ3"/>
<dbReference type="GeneID" id="93895611"/>
<dbReference type="KEGG" id="vvu:VV1_1343"/>
<dbReference type="HOGENOM" id="CLU_024251_2_3_6"/>
<dbReference type="UniPathway" id="UPA00109">
    <property type="reaction ID" value="UER00189"/>
</dbReference>
<dbReference type="UniPathway" id="UPA00138"/>
<dbReference type="Proteomes" id="UP000002275">
    <property type="component" value="Chromosome 1"/>
</dbReference>
<dbReference type="GO" id="GO:0005829">
    <property type="term" value="C:cytosol"/>
    <property type="evidence" value="ECO:0007669"/>
    <property type="project" value="TreeGrafter"/>
</dbReference>
<dbReference type="GO" id="GO:0004807">
    <property type="term" value="F:triose-phosphate isomerase activity"/>
    <property type="evidence" value="ECO:0007669"/>
    <property type="project" value="UniProtKB-UniRule"/>
</dbReference>
<dbReference type="GO" id="GO:0006094">
    <property type="term" value="P:gluconeogenesis"/>
    <property type="evidence" value="ECO:0007669"/>
    <property type="project" value="UniProtKB-UniRule"/>
</dbReference>
<dbReference type="GO" id="GO:0046166">
    <property type="term" value="P:glyceraldehyde-3-phosphate biosynthetic process"/>
    <property type="evidence" value="ECO:0007669"/>
    <property type="project" value="TreeGrafter"/>
</dbReference>
<dbReference type="GO" id="GO:0019563">
    <property type="term" value="P:glycerol catabolic process"/>
    <property type="evidence" value="ECO:0007669"/>
    <property type="project" value="TreeGrafter"/>
</dbReference>
<dbReference type="GO" id="GO:0006096">
    <property type="term" value="P:glycolytic process"/>
    <property type="evidence" value="ECO:0007669"/>
    <property type="project" value="UniProtKB-UniRule"/>
</dbReference>
<dbReference type="CDD" id="cd00311">
    <property type="entry name" value="TIM"/>
    <property type="match status" value="1"/>
</dbReference>
<dbReference type="FunFam" id="3.20.20.70:FF:000020">
    <property type="entry name" value="Triosephosphate isomerase"/>
    <property type="match status" value="1"/>
</dbReference>
<dbReference type="Gene3D" id="3.20.20.70">
    <property type="entry name" value="Aldolase class I"/>
    <property type="match status" value="1"/>
</dbReference>
<dbReference type="HAMAP" id="MF_00147_B">
    <property type="entry name" value="TIM_B"/>
    <property type="match status" value="1"/>
</dbReference>
<dbReference type="InterPro" id="IPR013785">
    <property type="entry name" value="Aldolase_TIM"/>
</dbReference>
<dbReference type="InterPro" id="IPR035990">
    <property type="entry name" value="TIM_sf"/>
</dbReference>
<dbReference type="InterPro" id="IPR022896">
    <property type="entry name" value="TrioseP_Isoase_bac/euk"/>
</dbReference>
<dbReference type="InterPro" id="IPR000652">
    <property type="entry name" value="Triosephosphate_isomerase"/>
</dbReference>
<dbReference type="InterPro" id="IPR020861">
    <property type="entry name" value="Triosephosphate_isomerase_AS"/>
</dbReference>
<dbReference type="NCBIfam" id="TIGR00419">
    <property type="entry name" value="tim"/>
    <property type="match status" value="1"/>
</dbReference>
<dbReference type="PANTHER" id="PTHR21139">
    <property type="entry name" value="TRIOSEPHOSPHATE ISOMERASE"/>
    <property type="match status" value="1"/>
</dbReference>
<dbReference type="PANTHER" id="PTHR21139:SF42">
    <property type="entry name" value="TRIOSEPHOSPHATE ISOMERASE"/>
    <property type="match status" value="1"/>
</dbReference>
<dbReference type="Pfam" id="PF00121">
    <property type="entry name" value="TIM"/>
    <property type="match status" value="1"/>
</dbReference>
<dbReference type="SUPFAM" id="SSF51351">
    <property type="entry name" value="Triosephosphate isomerase (TIM)"/>
    <property type="match status" value="1"/>
</dbReference>
<dbReference type="PROSITE" id="PS00171">
    <property type="entry name" value="TIM_1"/>
    <property type="match status" value="1"/>
</dbReference>
<dbReference type="PROSITE" id="PS51440">
    <property type="entry name" value="TIM_2"/>
    <property type="match status" value="1"/>
</dbReference>
<name>TPIS_VIBVU</name>
<organism>
    <name type="scientific">Vibrio vulnificus (strain CMCP6)</name>
    <dbReference type="NCBI Taxonomy" id="216895"/>
    <lineage>
        <taxon>Bacteria</taxon>
        <taxon>Pseudomonadati</taxon>
        <taxon>Pseudomonadota</taxon>
        <taxon>Gammaproteobacteria</taxon>
        <taxon>Vibrionales</taxon>
        <taxon>Vibrionaceae</taxon>
        <taxon>Vibrio</taxon>
    </lineage>
</organism>
<sequence length="256" mass="26948">MRRPVVMGNWKLNGSKTMVAELLTGLNAELEGVEGVDVAVAPPALYIDLAERLIAEGGNKIILGAQNTDINNSGAFTGDMSPAMLKDFGATHIIIGHSERREYHNESDEFVAKKFAFLKENGLKPVFCIGETEAQNEAGETEAVCARQINAVIDAYGVEALNGAIIAYEPIWAIGTGKAATAEDAQRIHASIRAMIAAKDAAVAEQVIIQYGGSVKPENAEAYFAQPDIDGALVGGASLDAKSFAAIAKAAAKMKA</sequence>
<evidence type="ECO:0000255" key="1">
    <source>
        <dbReference type="HAMAP-Rule" id="MF_00147"/>
    </source>
</evidence>
<reference key="1">
    <citation type="submission" date="2002-12" db="EMBL/GenBank/DDBJ databases">
        <title>Complete genome sequence of Vibrio vulnificus CMCP6.</title>
        <authorList>
            <person name="Rhee J.H."/>
            <person name="Kim S.Y."/>
            <person name="Chung S.S."/>
            <person name="Kim J.J."/>
            <person name="Moon Y.H."/>
            <person name="Jeong H."/>
            <person name="Choy H.E."/>
        </authorList>
    </citation>
    <scope>NUCLEOTIDE SEQUENCE [LARGE SCALE GENOMIC DNA]</scope>
    <source>
        <strain>CMCP6</strain>
    </source>
</reference>
<protein>
    <recommendedName>
        <fullName evidence="1">Triosephosphate isomerase</fullName>
        <shortName evidence="1">TIM</shortName>
        <shortName evidence="1">TPI</shortName>
        <ecNumber evidence="1">5.3.1.1</ecNumber>
    </recommendedName>
    <alternativeName>
        <fullName evidence="1">Triose-phosphate isomerase</fullName>
    </alternativeName>
</protein>
<proteinExistence type="inferred from homology"/>
<comment type="function">
    <text evidence="1">Involved in the gluconeogenesis. Catalyzes stereospecifically the conversion of dihydroxyacetone phosphate (DHAP) to D-glyceraldehyde-3-phosphate (G3P).</text>
</comment>
<comment type="catalytic activity">
    <reaction evidence="1">
        <text>D-glyceraldehyde 3-phosphate = dihydroxyacetone phosphate</text>
        <dbReference type="Rhea" id="RHEA:18585"/>
        <dbReference type="ChEBI" id="CHEBI:57642"/>
        <dbReference type="ChEBI" id="CHEBI:59776"/>
        <dbReference type="EC" id="5.3.1.1"/>
    </reaction>
</comment>
<comment type="pathway">
    <text evidence="1">Carbohydrate biosynthesis; gluconeogenesis.</text>
</comment>
<comment type="pathway">
    <text evidence="1">Carbohydrate degradation; glycolysis; D-glyceraldehyde 3-phosphate from glycerone phosphate: step 1/1.</text>
</comment>
<comment type="subunit">
    <text evidence="1">Homodimer.</text>
</comment>
<comment type="subcellular location">
    <subcellularLocation>
        <location evidence="1">Cytoplasm</location>
    </subcellularLocation>
</comment>
<comment type="similarity">
    <text evidence="1">Belongs to the triosephosphate isomerase family.</text>
</comment>